<reference key="1">
    <citation type="submission" date="2008-07" db="EMBL/GenBank/DDBJ databases">
        <authorList>
            <consortium name="NIH - Xenopus Gene Collection (XGC) project"/>
        </authorList>
    </citation>
    <scope>NUCLEOTIDE SEQUENCE [LARGE SCALE MRNA] (ISOFORMS 1 AND 2)</scope>
    <source>
        <tissue>Embryo</tissue>
    </source>
</reference>
<organism>
    <name type="scientific">Xenopus tropicalis</name>
    <name type="common">Western clawed frog</name>
    <name type="synonym">Silurana tropicalis</name>
    <dbReference type="NCBI Taxonomy" id="8364"/>
    <lineage>
        <taxon>Eukaryota</taxon>
        <taxon>Metazoa</taxon>
        <taxon>Chordata</taxon>
        <taxon>Craniata</taxon>
        <taxon>Vertebrata</taxon>
        <taxon>Euteleostomi</taxon>
        <taxon>Amphibia</taxon>
        <taxon>Batrachia</taxon>
        <taxon>Anura</taxon>
        <taxon>Pipoidea</taxon>
        <taxon>Pipidae</taxon>
        <taxon>Xenopodinae</taxon>
        <taxon>Xenopus</taxon>
        <taxon>Silurana</taxon>
    </lineage>
</organism>
<evidence type="ECO:0000250" key="1">
    <source>
        <dbReference type="UniProtKB" id="Q16775"/>
    </source>
</evidence>
<evidence type="ECO:0000255" key="2"/>
<evidence type="ECO:0000256" key="3">
    <source>
        <dbReference type="SAM" id="MobiDB-lite"/>
    </source>
</evidence>
<evidence type="ECO:0000303" key="4">
    <source ref="1"/>
</evidence>
<evidence type="ECO:0000305" key="5"/>
<dbReference type="EC" id="3.1.2.6" evidence="1"/>
<dbReference type="EMBL" id="BC167912">
    <property type="protein sequence ID" value="AAI67912.1"/>
    <property type="molecule type" value="mRNA"/>
</dbReference>
<dbReference type="RefSeq" id="NP_001135503.1">
    <molecule id="B4F6K2-1"/>
    <property type="nucleotide sequence ID" value="NM_001142031.1"/>
</dbReference>
<dbReference type="SMR" id="B4F6K2"/>
<dbReference type="FunCoup" id="B4F6K2">
    <property type="interactions" value="1714"/>
</dbReference>
<dbReference type="STRING" id="8364.ENSXETP00000002870"/>
<dbReference type="PaxDb" id="8364-ENSXETP00000015653"/>
<dbReference type="GeneID" id="100216043"/>
<dbReference type="KEGG" id="xtr:100216043"/>
<dbReference type="AGR" id="Xenbase:XB-GENE-966712"/>
<dbReference type="CTD" id="3029"/>
<dbReference type="Xenbase" id="XB-GENE-966712">
    <property type="gene designation" value="hagh"/>
</dbReference>
<dbReference type="eggNOG" id="KOG0813">
    <property type="taxonomic scope" value="Eukaryota"/>
</dbReference>
<dbReference type="InParanoid" id="B4F6K2"/>
<dbReference type="OrthoDB" id="515692at2759"/>
<dbReference type="Proteomes" id="UP000008143">
    <property type="component" value="Chromosome 9"/>
</dbReference>
<dbReference type="GO" id="GO:0005759">
    <property type="term" value="C:mitochondrial matrix"/>
    <property type="evidence" value="ECO:0007669"/>
    <property type="project" value="UniProtKB-SubCell"/>
</dbReference>
<dbReference type="GO" id="GO:0004416">
    <property type="term" value="F:hydroxyacylglutathione hydrolase activity"/>
    <property type="evidence" value="ECO:0000250"/>
    <property type="project" value="UniProtKB"/>
</dbReference>
<dbReference type="GO" id="GO:0046872">
    <property type="term" value="F:metal ion binding"/>
    <property type="evidence" value="ECO:0007669"/>
    <property type="project" value="UniProtKB-KW"/>
</dbReference>
<dbReference type="GO" id="GO:0019243">
    <property type="term" value="P:methylglyoxal catabolic process to D-lactate via S-lactoyl-glutathione"/>
    <property type="evidence" value="ECO:0007669"/>
    <property type="project" value="InterPro"/>
</dbReference>
<dbReference type="CDD" id="cd07723">
    <property type="entry name" value="hydroxyacylglutathione_hydrolase_MBL-fold"/>
    <property type="match status" value="1"/>
</dbReference>
<dbReference type="FunFam" id="3.60.15.10:FF:000019">
    <property type="entry name" value="Hydroxyacylglutathione hydrolase, mitochondrial"/>
    <property type="match status" value="1"/>
</dbReference>
<dbReference type="Gene3D" id="3.60.15.10">
    <property type="entry name" value="Ribonuclease Z/Hydroxyacylglutathione hydrolase-like"/>
    <property type="match status" value="1"/>
</dbReference>
<dbReference type="HAMAP" id="MF_01374">
    <property type="entry name" value="Glyoxalase_2"/>
    <property type="match status" value="1"/>
</dbReference>
<dbReference type="InterPro" id="IPR035680">
    <property type="entry name" value="Clx_II_MBL"/>
</dbReference>
<dbReference type="InterPro" id="IPR032282">
    <property type="entry name" value="HAGH_C"/>
</dbReference>
<dbReference type="InterPro" id="IPR017782">
    <property type="entry name" value="Hydroxyacylglutathione_Hdrlase"/>
</dbReference>
<dbReference type="InterPro" id="IPR001279">
    <property type="entry name" value="Metallo-B-lactamas"/>
</dbReference>
<dbReference type="InterPro" id="IPR036866">
    <property type="entry name" value="RibonucZ/Hydroxyglut_hydro"/>
</dbReference>
<dbReference type="NCBIfam" id="TIGR03413">
    <property type="entry name" value="GSH_gloB"/>
    <property type="match status" value="1"/>
</dbReference>
<dbReference type="PANTHER" id="PTHR11935">
    <property type="entry name" value="BETA LACTAMASE DOMAIN"/>
    <property type="match status" value="1"/>
</dbReference>
<dbReference type="PANTHER" id="PTHR11935:SF80">
    <property type="entry name" value="HYDROXYACYLGLUTATHIONE HYDROLASE, MITOCHONDRIAL"/>
    <property type="match status" value="1"/>
</dbReference>
<dbReference type="Pfam" id="PF16123">
    <property type="entry name" value="HAGH_C"/>
    <property type="match status" value="1"/>
</dbReference>
<dbReference type="Pfam" id="PF00753">
    <property type="entry name" value="Lactamase_B"/>
    <property type="match status" value="1"/>
</dbReference>
<dbReference type="PIRSF" id="PIRSF005457">
    <property type="entry name" value="Glx"/>
    <property type="match status" value="1"/>
</dbReference>
<dbReference type="SMART" id="SM00849">
    <property type="entry name" value="Lactamase_B"/>
    <property type="match status" value="1"/>
</dbReference>
<dbReference type="SUPFAM" id="SSF56281">
    <property type="entry name" value="Metallo-hydrolase/oxidoreductase"/>
    <property type="match status" value="1"/>
</dbReference>
<comment type="function">
    <text evidence="1">Thiolesterase that catalyzes the hydrolysis of S-D-lactoyl-glutathione to form glutathione and D-lactic acid.</text>
</comment>
<comment type="catalytic activity">
    <reaction evidence="1">
        <text>an S-(2-hydroxyacyl)glutathione + H2O = a 2-hydroxy carboxylate + glutathione + H(+)</text>
        <dbReference type="Rhea" id="RHEA:21864"/>
        <dbReference type="ChEBI" id="CHEBI:15377"/>
        <dbReference type="ChEBI" id="CHEBI:15378"/>
        <dbReference type="ChEBI" id="CHEBI:57925"/>
        <dbReference type="ChEBI" id="CHEBI:58896"/>
        <dbReference type="ChEBI" id="CHEBI:71261"/>
        <dbReference type="EC" id="3.1.2.6"/>
    </reaction>
    <physiologicalReaction direction="left-to-right" evidence="1">
        <dbReference type="Rhea" id="RHEA:21865"/>
    </physiologicalReaction>
</comment>
<comment type="catalytic activity">
    <reaction evidence="1">
        <text>(R)-S-lactoylglutathione + H2O = (R)-lactate + glutathione + H(+)</text>
        <dbReference type="Rhea" id="RHEA:25245"/>
        <dbReference type="ChEBI" id="CHEBI:15377"/>
        <dbReference type="ChEBI" id="CHEBI:15378"/>
        <dbReference type="ChEBI" id="CHEBI:16004"/>
        <dbReference type="ChEBI" id="CHEBI:57474"/>
        <dbReference type="ChEBI" id="CHEBI:57925"/>
        <dbReference type="EC" id="3.1.2.6"/>
    </reaction>
    <physiologicalReaction direction="left-to-right" evidence="1">
        <dbReference type="Rhea" id="RHEA:25246"/>
    </physiologicalReaction>
</comment>
<comment type="cofactor">
    <cofactor evidence="1">
        <name>Zn(2+)</name>
        <dbReference type="ChEBI" id="CHEBI:29105"/>
    </cofactor>
    <text evidence="1">Binds 2 Zn(2+) ions per subunit.</text>
</comment>
<comment type="subunit">
    <text evidence="1">Monomer.</text>
</comment>
<comment type="subcellular location">
    <molecule>Isoform 1</molecule>
    <subcellularLocation>
        <location evidence="1">Mitochondrion matrix</location>
    </subcellularLocation>
</comment>
<comment type="subcellular location">
    <molecule>Isoform 2</molecule>
    <subcellularLocation>
        <location evidence="1">Cytoplasm</location>
    </subcellularLocation>
</comment>
<comment type="alternative products">
    <event type="alternative initiation"/>
    <isoform>
        <id>B4F6K2-1</id>
        <name>1</name>
        <sequence type="displayed"/>
    </isoform>
    <isoform>
        <id>B4F6K2-2</id>
        <name>2</name>
        <sequence type="described" ref="VSP_037935"/>
    </isoform>
</comment>
<comment type="miscellaneous">
    <molecule>Isoform 2</molecule>
    <text evidence="5">Produced by alternative initiation at Met-54 of isoform 1. Alternative initiation has been proven in human.</text>
</comment>
<comment type="similarity">
    <text evidence="5">Belongs to the metallo-beta-lactamase superfamily. Glyoxalase II family.</text>
</comment>
<comment type="caution">
    <text evidence="5">Only one single gene encoding glyoxalase II has been identified in vertebrates. In yeast and higher plants, separate genes encode the cytosolic and mitochondrial forms of glyoxalase II.</text>
</comment>
<proteinExistence type="evidence at transcript level"/>
<name>GLO2_XENTR</name>
<sequence>MMLFGCRRSLWCALSFLGAAAGYRVGSAYLGTSVLQNQTPFELRNSKVVTQCTMKVELIPALTDNYMYLLIDEESKEAAIVDPVQPQKVVDAVKKHGVKLTTVLTTHHHWDHAGGNEKLVKMVSGLKVYGGDSRIGALTQKVSHLTTFQVGSLHVKCLYTPCHTSGHICYYVTKPNSTEPPAVFTGDTLFVAGCGKFFEGTPEEMYAALIEVLGRLPPETRVYCGHEYTINNLKFARHVEPCNDAIKQKLAWAKETYNSGEPTIPSTLAEEFTFNPFMRVREKSVQEHAGERDPISTMGAIRKEKDHFKVPKD</sequence>
<accession>B4F6K2</accession>
<keyword id="KW-0024">Alternative initiation</keyword>
<keyword id="KW-0963">Cytoplasm</keyword>
<keyword id="KW-0378">Hydrolase</keyword>
<keyword id="KW-0479">Metal-binding</keyword>
<keyword id="KW-0496">Mitochondrion</keyword>
<keyword id="KW-1185">Reference proteome</keyword>
<keyword id="KW-0809">Transit peptide</keyword>
<keyword id="KW-0862">Zinc</keyword>
<protein>
    <recommendedName>
        <fullName>Hydroxyacylglutathione hydrolase, mitochondrial</fullName>
        <ecNumber evidence="1">3.1.2.6</ecNumber>
    </recommendedName>
    <alternativeName>
        <fullName>Glyoxalase II</fullName>
        <shortName>Glx II</shortName>
    </alternativeName>
</protein>
<gene>
    <name type="primary">hagh</name>
</gene>
<feature type="transit peptide" description="Mitochondrion" evidence="2">
    <location>
        <begin position="1"/>
        <end status="unknown"/>
    </location>
</feature>
<feature type="chain" id="PRO_0000382745" description="Hydroxyacylglutathione hydrolase, mitochondrial">
    <location>
        <begin status="unknown"/>
        <end position="313"/>
    </location>
</feature>
<feature type="region of interest" description="Disordered" evidence="3">
    <location>
        <begin position="285"/>
        <end position="313"/>
    </location>
</feature>
<feature type="compositionally biased region" description="Basic and acidic residues" evidence="3">
    <location>
        <begin position="285"/>
        <end position="294"/>
    </location>
</feature>
<feature type="compositionally biased region" description="Basic and acidic residues" evidence="3">
    <location>
        <begin position="301"/>
        <end position="313"/>
    </location>
</feature>
<feature type="binding site" evidence="1">
    <location>
        <position position="107"/>
    </location>
    <ligand>
        <name>Zn(2+)</name>
        <dbReference type="ChEBI" id="CHEBI:29105"/>
        <label>1</label>
    </ligand>
</feature>
<feature type="binding site" evidence="1">
    <location>
        <position position="109"/>
    </location>
    <ligand>
        <name>Zn(2+)</name>
        <dbReference type="ChEBI" id="CHEBI:29105"/>
        <label>1</label>
    </ligand>
</feature>
<feature type="binding site" evidence="1">
    <location>
        <position position="111"/>
    </location>
    <ligand>
        <name>Zn(2+)</name>
        <dbReference type="ChEBI" id="CHEBI:29105"/>
        <label>2</label>
    </ligand>
</feature>
<feature type="binding site" evidence="1">
    <location>
        <position position="112"/>
    </location>
    <ligand>
        <name>Zn(2+)</name>
        <dbReference type="ChEBI" id="CHEBI:29105"/>
        <label>2</label>
    </ligand>
</feature>
<feature type="binding site" evidence="1">
    <location>
        <position position="163"/>
    </location>
    <ligand>
        <name>Zn(2+)</name>
        <dbReference type="ChEBI" id="CHEBI:29105"/>
        <label>1</label>
    </ligand>
</feature>
<feature type="binding site" evidence="1">
    <location>
        <position position="187"/>
    </location>
    <ligand>
        <name>Zn(2+)</name>
        <dbReference type="ChEBI" id="CHEBI:29105"/>
        <label>1</label>
    </ligand>
</feature>
<feature type="binding site" evidence="1">
    <location>
        <position position="187"/>
    </location>
    <ligand>
        <name>Zn(2+)</name>
        <dbReference type="ChEBI" id="CHEBI:29105"/>
        <label>2</label>
    </ligand>
</feature>
<feature type="binding site" evidence="1">
    <location>
        <begin position="196"/>
        <end position="198"/>
    </location>
    <ligand>
        <name>substrate</name>
    </ligand>
</feature>
<feature type="binding site" evidence="1">
    <location>
        <begin position="226"/>
        <end position="228"/>
    </location>
    <ligand>
        <name>substrate</name>
    </ligand>
</feature>
<feature type="binding site" evidence="1">
    <location>
        <position position="226"/>
    </location>
    <ligand>
        <name>Zn(2+)</name>
        <dbReference type="ChEBI" id="CHEBI:29105"/>
        <label>2</label>
    </ligand>
</feature>
<feature type="binding site" evidence="1">
    <location>
        <begin position="302"/>
        <end position="305"/>
    </location>
    <ligand>
        <name>substrate</name>
    </ligand>
</feature>
<feature type="splice variant" id="VSP_037935" description="In isoform 2." evidence="4">
    <location>
        <begin position="1"/>
        <end position="53"/>
    </location>
</feature>